<protein>
    <recommendedName>
        <fullName evidence="1">Glutamate-1-semialdehyde 2,1-aminomutase</fullName>
        <shortName evidence="1">GSA</shortName>
        <ecNumber evidence="1">5.4.3.8</ecNumber>
    </recommendedName>
    <alternativeName>
        <fullName evidence="1">Glutamate-1-semialdehyde aminotransferase</fullName>
        <shortName evidence="1">GSA-AT</shortName>
    </alternativeName>
</protein>
<accession>A5EXX1</accession>
<evidence type="ECO:0000255" key="1">
    <source>
        <dbReference type="HAMAP-Rule" id="MF_00375"/>
    </source>
</evidence>
<name>GSA_DICNV</name>
<sequence>MTDSAFTRAARVIPGGVNSPVRAFKSVGGEPIFIARAEGAYLYDVNGRRYIDYVGSYGPMINGHAHPEIVAAVCRASRNGMSYGAPNELETELAEKIVARVPSVEMVRMCNSGTEATMSAIRLARAATNRTQILKFAGCYHGHSDALLVSAGSGALTFGSPNSPGVPEDFVRHTLTAPYNDIAALERIFVQHGKNLAAVIVEPIAGNMNCVPPLPEFLPTLRALTKKYGVILIIDEVMTGFRVAYAGAQGLYDIAADLTTFGKVIGGGMPVGAFAGSADLMSMLSPVGSVYQAGTLSGNPVAMIAGITNLRLTEAEGFYDTLAAKTQKLAEGLRQAAKKNGIHVVVNDVCGMLGLFFTDLPQVCNFADVQTADTARFAKFFHAMLAEGVNLAPSAYETIFVSMAHDDAVLDETIAIAEYVFAHLEE</sequence>
<reference key="1">
    <citation type="journal article" date="2007" name="Nat. Biotechnol.">
        <title>Genome sequence and identification of candidate vaccine antigens from the animal pathogen Dichelobacter nodosus.</title>
        <authorList>
            <person name="Myers G.S.A."/>
            <person name="Parker D."/>
            <person name="Al-Hasani K."/>
            <person name="Kennan R.M."/>
            <person name="Seemann T."/>
            <person name="Ren Q."/>
            <person name="Badger J.H."/>
            <person name="Selengut J.D."/>
            <person name="Deboy R.T."/>
            <person name="Tettelin H."/>
            <person name="Boyce J.D."/>
            <person name="McCarl V.P."/>
            <person name="Han X."/>
            <person name="Nelson W.C."/>
            <person name="Madupu R."/>
            <person name="Mohamoud Y."/>
            <person name="Holley T."/>
            <person name="Fedorova N."/>
            <person name="Khouri H."/>
            <person name="Bottomley S.P."/>
            <person name="Whittington R.J."/>
            <person name="Adler B."/>
            <person name="Songer J.G."/>
            <person name="Rood J.I."/>
            <person name="Paulsen I.T."/>
        </authorList>
    </citation>
    <scope>NUCLEOTIDE SEQUENCE [LARGE SCALE GENOMIC DNA]</scope>
    <source>
        <strain>VCS1703A</strain>
    </source>
</reference>
<feature type="chain" id="PRO_0000382312" description="Glutamate-1-semialdehyde 2,1-aminomutase">
    <location>
        <begin position="1"/>
        <end position="426"/>
    </location>
</feature>
<feature type="modified residue" description="N6-(pyridoxal phosphate)lysine" evidence="1">
    <location>
        <position position="263"/>
    </location>
</feature>
<organism>
    <name type="scientific">Dichelobacter nodosus (strain VCS1703A)</name>
    <dbReference type="NCBI Taxonomy" id="246195"/>
    <lineage>
        <taxon>Bacteria</taxon>
        <taxon>Pseudomonadati</taxon>
        <taxon>Pseudomonadota</taxon>
        <taxon>Gammaproteobacteria</taxon>
        <taxon>Cardiobacteriales</taxon>
        <taxon>Cardiobacteriaceae</taxon>
        <taxon>Dichelobacter</taxon>
    </lineage>
</organism>
<gene>
    <name evidence="1" type="primary">hemL</name>
    <name type="ordered locus">DNO_1024</name>
</gene>
<comment type="catalytic activity">
    <reaction evidence="1">
        <text>(S)-4-amino-5-oxopentanoate = 5-aminolevulinate</text>
        <dbReference type="Rhea" id="RHEA:14265"/>
        <dbReference type="ChEBI" id="CHEBI:57501"/>
        <dbReference type="ChEBI" id="CHEBI:356416"/>
        <dbReference type="EC" id="5.4.3.8"/>
    </reaction>
</comment>
<comment type="cofactor">
    <cofactor evidence="1">
        <name>pyridoxal 5'-phosphate</name>
        <dbReference type="ChEBI" id="CHEBI:597326"/>
    </cofactor>
</comment>
<comment type="pathway">
    <text evidence="1">Porphyrin-containing compound metabolism; protoporphyrin-IX biosynthesis; 5-aminolevulinate from L-glutamyl-tRNA(Glu): step 2/2.</text>
</comment>
<comment type="subunit">
    <text evidence="1">Homodimer.</text>
</comment>
<comment type="subcellular location">
    <subcellularLocation>
        <location evidence="1">Cytoplasm</location>
    </subcellularLocation>
</comment>
<comment type="similarity">
    <text evidence="1">Belongs to the class-III pyridoxal-phosphate-dependent aminotransferase family. HemL subfamily.</text>
</comment>
<proteinExistence type="inferred from homology"/>
<dbReference type="EC" id="5.4.3.8" evidence="1"/>
<dbReference type="EMBL" id="CP000513">
    <property type="protein sequence ID" value="ABQ14353.1"/>
    <property type="molecule type" value="Genomic_DNA"/>
</dbReference>
<dbReference type="RefSeq" id="WP_012031336.1">
    <property type="nucleotide sequence ID" value="NC_009446.1"/>
</dbReference>
<dbReference type="SMR" id="A5EXX1"/>
<dbReference type="STRING" id="246195.DNO_1024"/>
<dbReference type="KEGG" id="dno:DNO_1024"/>
<dbReference type="eggNOG" id="COG0001">
    <property type="taxonomic scope" value="Bacteria"/>
</dbReference>
<dbReference type="HOGENOM" id="CLU_016922_1_5_6"/>
<dbReference type="OrthoDB" id="9801052at2"/>
<dbReference type="UniPathway" id="UPA00251">
    <property type="reaction ID" value="UER00317"/>
</dbReference>
<dbReference type="Proteomes" id="UP000000248">
    <property type="component" value="Chromosome"/>
</dbReference>
<dbReference type="GO" id="GO:0005737">
    <property type="term" value="C:cytoplasm"/>
    <property type="evidence" value="ECO:0007669"/>
    <property type="project" value="UniProtKB-SubCell"/>
</dbReference>
<dbReference type="GO" id="GO:0042286">
    <property type="term" value="F:glutamate-1-semialdehyde 2,1-aminomutase activity"/>
    <property type="evidence" value="ECO:0007669"/>
    <property type="project" value="UniProtKB-UniRule"/>
</dbReference>
<dbReference type="GO" id="GO:0030170">
    <property type="term" value="F:pyridoxal phosphate binding"/>
    <property type="evidence" value="ECO:0007669"/>
    <property type="project" value="InterPro"/>
</dbReference>
<dbReference type="GO" id="GO:0008483">
    <property type="term" value="F:transaminase activity"/>
    <property type="evidence" value="ECO:0007669"/>
    <property type="project" value="InterPro"/>
</dbReference>
<dbReference type="GO" id="GO:0006782">
    <property type="term" value="P:protoporphyrinogen IX biosynthetic process"/>
    <property type="evidence" value="ECO:0007669"/>
    <property type="project" value="UniProtKB-UniRule"/>
</dbReference>
<dbReference type="CDD" id="cd00610">
    <property type="entry name" value="OAT_like"/>
    <property type="match status" value="1"/>
</dbReference>
<dbReference type="FunFam" id="3.40.640.10:FF:000021">
    <property type="entry name" value="Glutamate-1-semialdehyde 2,1-aminomutase"/>
    <property type="match status" value="1"/>
</dbReference>
<dbReference type="Gene3D" id="3.90.1150.10">
    <property type="entry name" value="Aspartate Aminotransferase, domain 1"/>
    <property type="match status" value="1"/>
</dbReference>
<dbReference type="Gene3D" id="3.40.640.10">
    <property type="entry name" value="Type I PLP-dependent aspartate aminotransferase-like (Major domain)"/>
    <property type="match status" value="1"/>
</dbReference>
<dbReference type="HAMAP" id="MF_00375">
    <property type="entry name" value="HemL_aminotrans_3"/>
    <property type="match status" value="1"/>
</dbReference>
<dbReference type="InterPro" id="IPR004639">
    <property type="entry name" value="4pyrrol_synth_GluAld_NH2Trfase"/>
</dbReference>
<dbReference type="InterPro" id="IPR005814">
    <property type="entry name" value="Aminotrans_3"/>
</dbReference>
<dbReference type="InterPro" id="IPR049704">
    <property type="entry name" value="Aminotrans_3_PPA_site"/>
</dbReference>
<dbReference type="InterPro" id="IPR015424">
    <property type="entry name" value="PyrdxlP-dep_Trfase"/>
</dbReference>
<dbReference type="InterPro" id="IPR015421">
    <property type="entry name" value="PyrdxlP-dep_Trfase_major"/>
</dbReference>
<dbReference type="InterPro" id="IPR015422">
    <property type="entry name" value="PyrdxlP-dep_Trfase_small"/>
</dbReference>
<dbReference type="NCBIfam" id="TIGR00713">
    <property type="entry name" value="hemL"/>
    <property type="match status" value="1"/>
</dbReference>
<dbReference type="NCBIfam" id="NF000818">
    <property type="entry name" value="PRK00062.1"/>
    <property type="match status" value="1"/>
</dbReference>
<dbReference type="PANTHER" id="PTHR43713">
    <property type="entry name" value="GLUTAMATE-1-SEMIALDEHYDE 2,1-AMINOMUTASE"/>
    <property type="match status" value="1"/>
</dbReference>
<dbReference type="PANTHER" id="PTHR43713:SF3">
    <property type="entry name" value="GLUTAMATE-1-SEMIALDEHYDE 2,1-AMINOMUTASE 1, CHLOROPLASTIC-RELATED"/>
    <property type="match status" value="1"/>
</dbReference>
<dbReference type="Pfam" id="PF00202">
    <property type="entry name" value="Aminotran_3"/>
    <property type="match status" value="1"/>
</dbReference>
<dbReference type="PIRSF" id="PIRSF000521">
    <property type="entry name" value="Transaminase_4ab_Lys_Orn"/>
    <property type="match status" value="1"/>
</dbReference>
<dbReference type="SUPFAM" id="SSF53383">
    <property type="entry name" value="PLP-dependent transferases"/>
    <property type="match status" value="1"/>
</dbReference>
<dbReference type="PROSITE" id="PS00600">
    <property type="entry name" value="AA_TRANSFER_CLASS_3"/>
    <property type="match status" value="1"/>
</dbReference>
<keyword id="KW-0963">Cytoplasm</keyword>
<keyword id="KW-0413">Isomerase</keyword>
<keyword id="KW-0627">Porphyrin biosynthesis</keyword>
<keyword id="KW-0663">Pyridoxal phosphate</keyword>
<keyword id="KW-1185">Reference proteome</keyword>